<evidence type="ECO:0000250" key="1">
    <source>
        <dbReference type="UniProtKB" id="O95858"/>
    </source>
</evidence>
<evidence type="ECO:0000250" key="2">
    <source>
        <dbReference type="UniProtKB" id="Q86UF1"/>
    </source>
</evidence>
<evidence type="ECO:0000255" key="3"/>
<evidence type="ECO:0000269" key="4">
    <source>
    </source>
</evidence>
<evidence type="ECO:0000269" key="5">
    <source>
    </source>
</evidence>
<evidence type="ECO:0000269" key="6">
    <source>
    </source>
</evidence>
<evidence type="ECO:0000303" key="7">
    <source>
    </source>
</evidence>
<evidence type="ECO:0000305" key="8"/>
<keyword id="KW-0025">Alternative splicing</keyword>
<keyword id="KW-0965">Cell junction</keyword>
<keyword id="KW-1003">Cell membrane</keyword>
<keyword id="KW-0963">Cytoplasm</keyword>
<keyword id="KW-1015">Disulfide bond</keyword>
<keyword id="KW-0325">Glycoprotein</keyword>
<keyword id="KW-0472">Membrane</keyword>
<keyword id="KW-1185">Reference proteome</keyword>
<keyword id="KW-0812">Transmembrane</keyword>
<keyword id="KW-1133">Transmembrane helix</keyword>
<sequence length="283" mass="31550">MARRPGVPAAYGDEFSFVSPLVKYLLFFFNMLFWVISMVMVAVGVYARLMKHAEAALACLAVDPAILLIVVGVLMFLLTFCGCIGSLRENICLLQTFSLCLTIVFLLQLAAGILGFVFSDKARGKVSEIINNAIVHYRDDLDLQNLIDFGQKKFSCCGGISYRDWSQNMYFNCSEDNPSRERCSVPYSCCLPTPNQAVINTMCGQGMQALDYLEASKVIYTNGCIDKLVNWIHSNLFLLGGVALGLAIPQLVGILLSQVLVNQIKDQIKLQLYNQQHRADPWY</sequence>
<name>TSN33_MOUSE</name>
<organism>
    <name type="scientific">Mus musculus</name>
    <name type="common">Mouse</name>
    <dbReference type="NCBI Taxonomy" id="10090"/>
    <lineage>
        <taxon>Eukaryota</taxon>
        <taxon>Metazoa</taxon>
        <taxon>Chordata</taxon>
        <taxon>Craniata</taxon>
        <taxon>Vertebrata</taxon>
        <taxon>Euteleostomi</taxon>
        <taxon>Mammalia</taxon>
        <taxon>Eutheria</taxon>
        <taxon>Euarchontoglires</taxon>
        <taxon>Glires</taxon>
        <taxon>Rodentia</taxon>
        <taxon>Myomorpha</taxon>
        <taxon>Muroidea</taxon>
        <taxon>Muridae</taxon>
        <taxon>Murinae</taxon>
        <taxon>Mus</taxon>
        <taxon>Mus</taxon>
    </lineage>
</organism>
<gene>
    <name type="primary">Tspan33</name>
    <name type="synonym">Pen</name>
</gene>
<proteinExistence type="evidence at protein level"/>
<protein>
    <recommendedName>
        <fullName>Tetraspanin-33</fullName>
        <shortName>Tspan-33</shortName>
    </recommendedName>
    <alternativeName>
        <fullName>Penumbra</fullName>
        <shortName>mPen</shortName>
    </alternativeName>
    <alternativeName>
        <fullName>Proerythroblast new membrane</fullName>
    </alternativeName>
</protein>
<dbReference type="EMBL" id="AF276890">
    <property type="protein sequence ID" value="AAQ14313.1"/>
    <property type="molecule type" value="mRNA"/>
</dbReference>
<dbReference type="EMBL" id="AK172176">
    <property type="protein sequence ID" value="BAE42867.1"/>
    <property type="molecule type" value="mRNA"/>
</dbReference>
<dbReference type="EMBL" id="BC024685">
    <property type="protein sequence ID" value="AAH24685.1"/>
    <property type="molecule type" value="mRNA"/>
</dbReference>
<dbReference type="CCDS" id="CCDS19964.1">
    <molecule id="Q8R3S2-1"/>
</dbReference>
<dbReference type="CCDS" id="CCDS80506.1">
    <molecule id="Q8R3S2-2"/>
</dbReference>
<dbReference type="RefSeq" id="NP_001288336.1">
    <molecule id="Q8R3S2-2"/>
    <property type="nucleotide sequence ID" value="NM_001301407.1"/>
</dbReference>
<dbReference type="RefSeq" id="NP_666285.1">
    <molecule id="Q8R3S2-1"/>
    <property type="nucleotide sequence ID" value="NM_146173.3"/>
</dbReference>
<dbReference type="SMR" id="Q8R3S2"/>
<dbReference type="FunCoup" id="Q8R3S2">
    <property type="interactions" value="91"/>
</dbReference>
<dbReference type="STRING" id="10090.ENSMUSP00000045282"/>
<dbReference type="GlyCosmos" id="Q8R3S2">
    <property type="glycosylation" value="1 site, No reported glycans"/>
</dbReference>
<dbReference type="GlyGen" id="Q8R3S2">
    <property type="glycosylation" value="1 site"/>
</dbReference>
<dbReference type="PhosphoSitePlus" id="Q8R3S2"/>
<dbReference type="SwissPalm" id="Q8R3S2"/>
<dbReference type="PaxDb" id="10090-ENSMUSP00000045282"/>
<dbReference type="ProteomicsDB" id="297663">
    <molecule id="Q8R3S2-1"/>
</dbReference>
<dbReference type="ProteomicsDB" id="297664">
    <molecule id="Q8R3S2-2"/>
</dbReference>
<dbReference type="Antibodypedia" id="17866">
    <property type="antibodies" value="206 antibodies from 26 providers"/>
</dbReference>
<dbReference type="DNASU" id="232670"/>
<dbReference type="Ensembl" id="ENSMUST00000046750.14">
    <molecule id="Q8R3S2-1"/>
    <property type="protein sequence ID" value="ENSMUSP00000045282.8"/>
    <property type="gene ID" value="ENSMUSG00000001763.15"/>
</dbReference>
<dbReference type="Ensembl" id="ENSMUST00000115250.4">
    <molecule id="Q8R3S2-2"/>
    <property type="protein sequence ID" value="ENSMUSP00000110905.4"/>
    <property type="gene ID" value="ENSMUSG00000001763.15"/>
</dbReference>
<dbReference type="GeneID" id="232670"/>
<dbReference type="KEGG" id="mmu:232670"/>
<dbReference type="UCSC" id="uc009bec.2">
    <molecule id="Q8R3S2-1"/>
    <property type="organism name" value="mouse"/>
</dbReference>
<dbReference type="UCSC" id="uc009bed.2">
    <molecule id="Q8R3S2-2"/>
    <property type="organism name" value="mouse"/>
</dbReference>
<dbReference type="AGR" id="MGI:1919012"/>
<dbReference type="CTD" id="340348"/>
<dbReference type="MGI" id="MGI:1919012">
    <property type="gene designation" value="Tspan33"/>
</dbReference>
<dbReference type="VEuPathDB" id="HostDB:ENSMUSG00000001763"/>
<dbReference type="eggNOG" id="KOG3882">
    <property type="taxonomic scope" value="Eukaryota"/>
</dbReference>
<dbReference type="GeneTree" id="ENSGT00940000159484"/>
<dbReference type="HOGENOM" id="CLU_055524_0_3_1"/>
<dbReference type="InParanoid" id="Q8R3S2"/>
<dbReference type="OMA" id="IQTYRED"/>
<dbReference type="OrthoDB" id="2014092at2759"/>
<dbReference type="PhylomeDB" id="Q8R3S2"/>
<dbReference type="TreeFam" id="TF313002"/>
<dbReference type="BioGRID-ORCS" id="232670">
    <property type="hits" value="3 hits in 76 CRISPR screens"/>
</dbReference>
<dbReference type="ChiTaRS" id="Tspan33">
    <property type="organism name" value="mouse"/>
</dbReference>
<dbReference type="PRO" id="PR:Q8R3S2"/>
<dbReference type="Proteomes" id="UP000000589">
    <property type="component" value="Chromosome 6"/>
</dbReference>
<dbReference type="RNAct" id="Q8R3S2">
    <property type="molecule type" value="protein"/>
</dbReference>
<dbReference type="Bgee" id="ENSMUSG00000001763">
    <property type="expression patterns" value="Expressed in fetal liver hematopoietic progenitor cell and 239 other cell types or tissues"/>
</dbReference>
<dbReference type="GO" id="GO:0005912">
    <property type="term" value="C:adherens junction"/>
    <property type="evidence" value="ECO:0007669"/>
    <property type="project" value="UniProtKB-SubCell"/>
</dbReference>
<dbReference type="GO" id="GO:0009986">
    <property type="term" value="C:cell surface"/>
    <property type="evidence" value="ECO:0000314"/>
    <property type="project" value="UniProtKB"/>
</dbReference>
<dbReference type="GO" id="GO:0005737">
    <property type="term" value="C:cytoplasm"/>
    <property type="evidence" value="ECO:0007669"/>
    <property type="project" value="UniProtKB-SubCell"/>
</dbReference>
<dbReference type="GO" id="GO:0046930">
    <property type="term" value="C:pore complex"/>
    <property type="evidence" value="ECO:0000315"/>
    <property type="project" value="UniProtKB"/>
</dbReference>
<dbReference type="GO" id="GO:0097197">
    <property type="term" value="C:tetraspanin-enriched microdomain"/>
    <property type="evidence" value="ECO:0000314"/>
    <property type="project" value="UniProtKB"/>
</dbReference>
<dbReference type="GO" id="GO:0019899">
    <property type="term" value="F:enzyme binding"/>
    <property type="evidence" value="ECO:0000353"/>
    <property type="project" value="UniProtKB"/>
</dbReference>
<dbReference type="GO" id="GO:0046931">
    <property type="term" value="P:pore complex assembly"/>
    <property type="evidence" value="ECO:0000315"/>
    <property type="project" value="UniProtKB"/>
</dbReference>
<dbReference type="GO" id="GO:0072659">
    <property type="term" value="P:protein localization to plasma membrane"/>
    <property type="evidence" value="ECO:0000315"/>
    <property type="project" value="UniProtKB"/>
</dbReference>
<dbReference type="GO" id="GO:0051604">
    <property type="term" value="P:protein maturation"/>
    <property type="evidence" value="ECO:0000315"/>
    <property type="project" value="UniProtKB"/>
</dbReference>
<dbReference type="CDD" id="cd03158">
    <property type="entry name" value="penumbra_like_LEL"/>
    <property type="match status" value="1"/>
</dbReference>
<dbReference type="FunFam" id="1.10.1450.10:FF:000007">
    <property type="entry name" value="Tetraspanin"/>
    <property type="match status" value="1"/>
</dbReference>
<dbReference type="Gene3D" id="1.10.1450.10">
    <property type="entry name" value="Tetraspanin"/>
    <property type="match status" value="1"/>
</dbReference>
<dbReference type="InterPro" id="IPR018499">
    <property type="entry name" value="Tetraspanin/Peripherin"/>
</dbReference>
<dbReference type="InterPro" id="IPR000301">
    <property type="entry name" value="Tetraspanin_animals"/>
</dbReference>
<dbReference type="InterPro" id="IPR008952">
    <property type="entry name" value="Tetraspanin_EC2_sf"/>
</dbReference>
<dbReference type="PANTHER" id="PTHR19282">
    <property type="entry name" value="TETRASPANIN"/>
    <property type="match status" value="1"/>
</dbReference>
<dbReference type="PANTHER" id="PTHR19282:SF154">
    <property type="entry name" value="TETRASPANIN-33"/>
    <property type="match status" value="1"/>
</dbReference>
<dbReference type="Pfam" id="PF00335">
    <property type="entry name" value="Tetraspanin"/>
    <property type="match status" value="1"/>
</dbReference>
<dbReference type="PIRSF" id="PIRSF002419">
    <property type="entry name" value="Tetraspanin"/>
    <property type="match status" value="1"/>
</dbReference>
<dbReference type="PRINTS" id="PR00259">
    <property type="entry name" value="TMFOUR"/>
</dbReference>
<dbReference type="SUPFAM" id="SSF48652">
    <property type="entry name" value="Tetraspanin"/>
    <property type="match status" value="1"/>
</dbReference>
<comment type="function">
    <text evidence="2 4 6">Part of TspanC8 subgroup, composed of 6 members that interact with the transmembrane metalloprotease ADAM10. This interaction is required for ADAM10 exit from the endoplasmic reticulum and for enzymatic maturation and trafficking to the cell surface as well as substrate specificity. Different TspanC8/ADAM10 complexes have distinct substrates (By similarity). Plays an important role in normal erythropoiesis. It has a role in the differentiation of erythroid progenitors (PubMed:17158226). Negatively regulates ligand-induced Notch activity probably by regulating ADAM10 activity (By similarity). Mediates docking of ADAM10 to zonula adherens by interacting with ADAM10 and, in a PDZD11-dependent manner, with the zonula adherens protein PLEKHA7 (PubMed:30463011).</text>
</comment>
<comment type="subunit">
    <text evidence="4 6">Homodimer; disulfide-linked (PubMed:17158226). Interacts (via extracellular domain) with ADAM10 (via extracellular domain) (PubMed:30463011). Interacts (via cytoplasmic domain) with PLEKHA7 (via WW domains); the interaction is dependent on PDZD11 being bound to PLEKHA7 and facilitates the docking of ADAM10 to zonula adherens (PubMed:30463011).</text>
</comment>
<comment type="subcellular location">
    <subcellularLocation>
        <location evidence="6">Cell membrane</location>
        <topology evidence="8">Multi-pass membrane protein</topology>
    </subcellularLocation>
    <subcellularLocation>
        <location evidence="6">Cell junction</location>
        <location evidence="6">Adherens junction</location>
    </subcellularLocation>
    <subcellularLocation>
        <location evidence="6">Cytoplasm</location>
    </subcellularLocation>
    <text evidence="6">Is localized to zonula adherens by PLEKHA7 by a PDZD11-dependent interaction.</text>
</comment>
<comment type="alternative products">
    <event type="alternative splicing"/>
    <isoform>
        <id>Q8R3S2-1</id>
        <name>1</name>
        <sequence type="displayed"/>
    </isoform>
    <isoform>
        <id>Q8R3S2-2</id>
        <name>2</name>
        <sequence type="described" ref="VSP_024250"/>
    </isoform>
</comment>
<comment type="tissue specificity">
    <text evidence="4 5">Predominantly expressed in erythroblasts.</text>
</comment>
<comment type="similarity">
    <text evidence="8">Belongs to the tetraspanin (TM4SF) family.</text>
</comment>
<reference key="1">
    <citation type="journal article" date="2007" name="Blood">
        <title>Penumbra encodes a novel tetraspanin that is highly expressed in erythroid progenitors and promotes effective erythropoiesis.</title>
        <authorList>
            <person name="Heikens M.J."/>
            <person name="Cao T.M."/>
            <person name="Morita C."/>
            <person name="Dehart S.L."/>
            <person name="Tsai S."/>
        </authorList>
    </citation>
    <scope>NUCLEOTIDE SEQUENCE [MRNA] (ISOFORM 1)</scope>
    <scope>FUNCTION</scope>
    <scope>SUBUNIT</scope>
    <scope>TISSUE SPECIFICITY</scope>
</reference>
<reference key="2">
    <citation type="journal article" date="2005" name="Science">
        <title>The transcriptional landscape of the mammalian genome.</title>
        <authorList>
            <person name="Carninci P."/>
            <person name="Kasukawa T."/>
            <person name="Katayama S."/>
            <person name="Gough J."/>
            <person name="Frith M.C."/>
            <person name="Maeda N."/>
            <person name="Oyama R."/>
            <person name="Ravasi T."/>
            <person name="Lenhard B."/>
            <person name="Wells C."/>
            <person name="Kodzius R."/>
            <person name="Shimokawa K."/>
            <person name="Bajic V.B."/>
            <person name="Brenner S.E."/>
            <person name="Batalov S."/>
            <person name="Forrest A.R."/>
            <person name="Zavolan M."/>
            <person name="Davis M.J."/>
            <person name="Wilming L.G."/>
            <person name="Aidinis V."/>
            <person name="Allen J.E."/>
            <person name="Ambesi-Impiombato A."/>
            <person name="Apweiler R."/>
            <person name="Aturaliya R.N."/>
            <person name="Bailey T.L."/>
            <person name="Bansal M."/>
            <person name="Baxter L."/>
            <person name="Beisel K.W."/>
            <person name="Bersano T."/>
            <person name="Bono H."/>
            <person name="Chalk A.M."/>
            <person name="Chiu K.P."/>
            <person name="Choudhary V."/>
            <person name="Christoffels A."/>
            <person name="Clutterbuck D.R."/>
            <person name="Crowe M.L."/>
            <person name="Dalla E."/>
            <person name="Dalrymple B.P."/>
            <person name="de Bono B."/>
            <person name="Della Gatta G."/>
            <person name="di Bernardo D."/>
            <person name="Down T."/>
            <person name="Engstrom P."/>
            <person name="Fagiolini M."/>
            <person name="Faulkner G."/>
            <person name="Fletcher C.F."/>
            <person name="Fukushima T."/>
            <person name="Furuno M."/>
            <person name="Futaki S."/>
            <person name="Gariboldi M."/>
            <person name="Georgii-Hemming P."/>
            <person name="Gingeras T.R."/>
            <person name="Gojobori T."/>
            <person name="Green R.E."/>
            <person name="Gustincich S."/>
            <person name="Harbers M."/>
            <person name="Hayashi Y."/>
            <person name="Hensch T.K."/>
            <person name="Hirokawa N."/>
            <person name="Hill D."/>
            <person name="Huminiecki L."/>
            <person name="Iacono M."/>
            <person name="Ikeo K."/>
            <person name="Iwama A."/>
            <person name="Ishikawa T."/>
            <person name="Jakt M."/>
            <person name="Kanapin A."/>
            <person name="Katoh M."/>
            <person name="Kawasawa Y."/>
            <person name="Kelso J."/>
            <person name="Kitamura H."/>
            <person name="Kitano H."/>
            <person name="Kollias G."/>
            <person name="Krishnan S.P."/>
            <person name="Kruger A."/>
            <person name="Kummerfeld S.K."/>
            <person name="Kurochkin I.V."/>
            <person name="Lareau L.F."/>
            <person name="Lazarevic D."/>
            <person name="Lipovich L."/>
            <person name="Liu J."/>
            <person name="Liuni S."/>
            <person name="McWilliam S."/>
            <person name="Madan Babu M."/>
            <person name="Madera M."/>
            <person name="Marchionni L."/>
            <person name="Matsuda H."/>
            <person name="Matsuzawa S."/>
            <person name="Miki H."/>
            <person name="Mignone F."/>
            <person name="Miyake S."/>
            <person name="Morris K."/>
            <person name="Mottagui-Tabar S."/>
            <person name="Mulder N."/>
            <person name="Nakano N."/>
            <person name="Nakauchi H."/>
            <person name="Ng P."/>
            <person name="Nilsson R."/>
            <person name="Nishiguchi S."/>
            <person name="Nishikawa S."/>
            <person name="Nori F."/>
            <person name="Ohara O."/>
            <person name="Okazaki Y."/>
            <person name="Orlando V."/>
            <person name="Pang K.C."/>
            <person name="Pavan W.J."/>
            <person name="Pavesi G."/>
            <person name="Pesole G."/>
            <person name="Petrovsky N."/>
            <person name="Piazza S."/>
            <person name="Reed J."/>
            <person name="Reid J.F."/>
            <person name="Ring B.Z."/>
            <person name="Ringwald M."/>
            <person name="Rost B."/>
            <person name="Ruan Y."/>
            <person name="Salzberg S.L."/>
            <person name="Sandelin A."/>
            <person name="Schneider C."/>
            <person name="Schoenbach C."/>
            <person name="Sekiguchi K."/>
            <person name="Semple C.A."/>
            <person name="Seno S."/>
            <person name="Sessa L."/>
            <person name="Sheng Y."/>
            <person name="Shibata Y."/>
            <person name="Shimada H."/>
            <person name="Shimada K."/>
            <person name="Silva D."/>
            <person name="Sinclair B."/>
            <person name="Sperling S."/>
            <person name="Stupka E."/>
            <person name="Sugiura K."/>
            <person name="Sultana R."/>
            <person name="Takenaka Y."/>
            <person name="Taki K."/>
            <person name="Tammoja K."/>
            <person name="Tan S.L."/>
            <person name="Tang S."/>
            <person name="Taylor M.S."/>
            <person name="Tegner J."/>
            <person name="Teichmann S.A."/>
            <person name="Ueda H.R."/>
            <person name="van Nimwegen E."/>
            <person name="Verardo R."/>
            <person name="Wei C.L."/>
            <person name="Yagi K."/>
            <person name="Yamanishi H."/>
            <person name="Zabarovsky E."/>
            <person name="Zhu S."/>
            <person name="Zimmer A."/>
            <person name="Hide W."/>
            <person name="Bult C."/>
            <person name="Grimmond S.M."/>
            <person name="Teasdale R.D."/>
            <person name="Liu E.T."/>
            <person name="Brusic V."/>
            <person name="Quackenbush J."/>
            <person name="Wahlestedt C."/>
            <person name="Mattick J.S."/>
            <person name="Hume D.A."/>
            <person name="Kai C."/>
            <person name="Sasaki D."/>
            <person name="Tomaru Y."/>
            <person name="Fukuda S."/>
            <person name="Kanamori-Katayama M."/>
            <person name="Suzuki M."/>
            <person name="Aoki J."/>
            <person name="Arakawa T."/>
            <person name="Iida J."/>
            <person name="Imamura K."/>
            <person name="Itoh M."/>
            <person name="Kato T."/>
            <person name="Kawaji H."/>
            <person name="Kawagashira N."/>
            <person name="Kawashima T."/>
            <person name="Kojima M."/>
            <person name="Kondo S."/>
            <person name="Konno H."/>
            <person name="Nakano K."/>
            <person name="Ninomiya N."/>
            <person name="Nishio T."/>
            <person name="Okada M."/>
            <person name="Plessy C."/>
            <person name="Shibata K."/>
            <person name="Shiraki T."/>
            <person name="Suzuki S."/>
            <person name="Tagami M."/>
            <person name="Waki K."/>
            <person name="Watahiki A."/>
            <person name="Okamura-Oho Y."/>
            <person name="Suzuki H."/>
            <person name="Kawai J."/>
            <person name="Hayashizaki Y."/>
        </authorList>
    </citation>
    <scope>NUCLEOTIDE SEQUENCE [LARGE SCALE MRNA] (ISOFORM 2)</scope>
    <source>
        <strain>NOD</strain>
    </source>
</reference>
<reference key="3">
    <citation type="journal article" date="2004" name="Genome Res.">
        <title>The status, quality, and expansion of the NIH full-length cDNA project: the Mammalian Gene Collection (MGC).</title>
        <authorList>
            <consortium name="The MGC Project Team"/>
        </authorList>
    </citation>
    <scope>NUCLEOTIDE SEQUENCE [LARGE SCALE MRNA] (ISOFORM 1)</scope>
    <source>
        <strain>FVB/N</strain>
        <tissue>Mammary tumor</tissue>
    </source>
</reference>
<reference key="4">
    <citation type="journal article" date="2010" name="Cell">
        <title>A tissue-specific atlas of mouse protein phosphorylation and expression.</title>
        <authorList>
            <person name="Huttlin E.L."/>
            <person name="Jedrychowski M.P."/>
            <person name="Elias J.E."/>
            <person name="Goswami T."/>
            <person name="Rad R."/>
            <person name="Beausoleil S.A."/>
            <person name="Villen J."/>
            <person name="Haas W."/>
            <person name="Sowa M.E."/>
            <person name="Gygi S.P."/>
        </authorList>
    </citation>
    <scope>IDENTIFICATION BY MASS SPECTROMETRY [LARGE SCALE ANALYSIS]</scope>
    <source>
        <tissue>Lung</tissue>
        <tissue>Spleen</tissue>
    </source>
</reference>
<reference key="5">
    <citation type="journal article" date="2012" name="J. Biol. Chem.">
        <title>The TspanC8 subgroup of tetraspanins interacts with A disintegrin and metalloprotease 10 (ADAM10) and regulates its maturation and cell surface expression.</title>
        <authorList>
            <person name="Haining E.J."/>
            <person name="Yang J."/>
            <person name="Bailey R.L."/>
            <person name="Khan K."/>
            <person name="Collier R."/>
            <person name="Tsai S."/>
            <person name="Watson S.P."/>
            <person name="Frampton J."/>
            <person name="Garcia P."/>
            <person name="Tomlinson M.G."/>
        </authorList>
    </citation>
    <scope>FUNCTION</scope>
    <scope>INTERACTION WITH ADAM10</scope>
    <scope>TISSUE SPECIFICITY</scope>
</reference>
<reference key="6">
    <citation type="journal article" date="2016" name="J. Biol. Chem.">
        <title>TspanC8 tetraspanins and A disintegrin and metalloprotease 10 (ADAM10) interact via their extracellular regions: evidence for distinct binding mechanisms for different TspanC8 proteins.</title>
        <authorList>
            <person name="Noy P.J."/>
            <person name="Yang J."/>
            <person name="Reyat J.S."/>
            <person name="Matthews A.L."/>
            <person name="Charlton A.E."/>
            <person name="Furmston J."/>
            <person name="Rogers D.A."/>
            <person name="Rainger G.E."/>
            <person name="Tomlinson M.G."/>
        </authorList>
    </citation>
    <scope>INTERACTION WITH ADAM10</scope>
</reference>
<reference key="7">
    <citation type="journal article" date="2018" name="Cell Rep.">
        <title>A Dock-and-Lock Mechanism Clusters ADAM10 at Cell-Cell Junctions to Promote alpha-Toxin Cytotoxicity.</title>
        <authorList>
            <person name="Shah J."/>
            <person name="Rouaud F."/>
            <person name="Guerrera D."/>
            <person name="Vasileva E."/>
            <person name="Popov L.M."/>
            <person name="Kelley W.L."/>
            <person name="Rubinstein E."/>
            <person name="Carette J.E."/>
            <person name="Amieva M.R."/>
            <person name="Citi S."/>
        </authorList>
    </citation>
    <scope>FUNCTION</scope>
    <scope>SUBCELLULAR LOCATION</scope>
    <scope>INTERACTION WITH ADAM10 AND PLEKHA7</scope>
</reference>
<feature type="chain" id="PRO_0000282923" description="Tetraspanin-33">
    <location>
        <begin position="1"/>
        <end position="283"/>
    </location>
</feature>
<feature type="topological domain" description="Cytoplasmic" evidence="3">
    <location>
        <begin position="1"/>
        <end position="24"/>
    </location>
</feature>
<feature type="transmembrane region" description="Helical" evidence="3">
    <location>
        <begin position="25"/>
        <end position="45"/>
    </location>
</feature>
<feature type="topological domain" description="Extracellular" evidence="3">
    <location>
        <begin position="46"/>
        <end position="64"/>
    </location>
</feature>
<feature type="transmembrane region" description="Helical" evidence="3">
    <location>
        <begin position="65"/>
        <end position="85"/>
    </location>
</feature>
<feature type="topological domain" description="Cytoplasmic" evidence="3">
    <location>
        <begin position="86"/>
        <end position="96"/>
    </location>
</feature>
<feature type="transmembrane region" description="Helical" evidence="3">
    <location>
        <begin position="97"/>
        <end position="117"/>
    </location>
</feature>
<feature type="topological domain" description="Extracellular" evidence="3">
    <location>
        <begin position="118"/>
        <end position="235"/>
    </location>
</feature>
<feature type="transmembrane region" description="Helical" evidence="3">
    <location>
        <begin position="236"/>
        <end position="256"/>
    </location>
</feature>
<feature type="topological domain" description="Cytoplasmic" evidence="3">
    <location>
        <begin position="257"/>
        <end position="283"/>
    </location>
</feature>
<feature type="glycosylation site" description="N-linked (GlcNAc...) asparagine" evidence="3">
    <location>
        <position position="172"/>
    </location>
</feature>
<feature type="disulfide bond" evidence="1">
    <location>
        <begin position="156"/>
        <end position="224"/>
    </location>
</feature>
<feature type="disulfide bond" evidence="1">
    <location>
        <begin position="157"/>
        <end position="189"/>
    </location>
</feature>
<feature type="disulfide bond" evidence="1">
    <location>
        <begin position="173"/>
        <end position="183"/>
    </location>
</feature>
<feature type="disulfide bond" evidence="1">
    <location>
        <begin position="190"/>
        <end position="203"/>
    </location>
</feature>
<feature type="splice variant" id="VSP_024250" description="In isoform 2." evidence="7">
    <location>
        <position position="54"/>
    </location>
</feature>
<accession>Q8R3S2</accession>
<accession>Q3TA03</accession>